<reference key="1">
    <citation type="journal article" date="1993" name="Mol. Microbiol.">
        <title>Characterization of comE, a late competence operon of Bacillus subtilis required for the binding and uptake of transforming DNA.</title>
        <authorList>
            <person name="Hahn J."/>
            <person name="Inamine G."/>
            <person name="Kozlov Y."/>
            <person name="Dubnau D.A."/>
        </authorList>
    </citation>
    <scope>NUCLEOTIDE SEQUENCE [GENOMIC DNA]</scope>
    <scope>FUNCTION</scope>
</reference>
<reference key="2">
    <citation type="journal article" date="1996" name="Microbiology">
        <title>Systematic sequencing of the 283 kb 210 degrees-232 degrees region of the Bacillus subtilis genome containing the skin element and many sporulation genes.</title>
        <authorList>
            <person name="Mizuno M."/>
            <person name="Masuda S."/>
            <person name="Takemaru K."/>
            <person name="Hosono S."/>
            <person name="Sato T."/>
            <person name="Takeuchi M."/>
            <person name="Kobayashi Y."/>
        </authorList>
    </citation>
    <scope>NUCLEOTIDE SEQUENCE [GENOMIC DNA]</scope>
    <source>
        <strain>168 / JH642</strain>
    </source>
</reference>
<reference key="3">
    <citation type="journal article" date="1997" name="Nature">
        <title>The complete genome sequence of the Gram-positive bacterium Bacillus subtilis.</title>
        <authorList>
            <person name="Kunst F."/>
            <person name="Ogasawara N."/>
            <person name="Moszer I."/>
            <person name="Albertini A.M."/>
            <person name="Alloni G."/>
            <person name="Azevedo V."/>
            <person name="Bertero M.G."/>
            <person name="Bessieres P."/>
            <person name="Bolotin A."/>
            <person name="Borchert S."/>
            <person name="Borriss R."/>
            <person name="Boursier L."/>
            <person name="Brans A."/>
            <person name="Braun M."/>
            <person name="Brignell S.C."/>
            <person name="Bron S."/>
            <person name="Brouillet S."/>
            <person name="Bruschi C.V."/>
            <person name="Caldwell B."/>
            <person name="Capuano V."/>
            <person name="Carter N.M."/>
            <person name="Choi S.-K."/>
            <person name="Codani J.-J."/>
            <person name="Connerton I.F."/>
            <person name="Cummings N.J."/>
            <person name="Daniel R.A."/>
            <person name="Denizot F."/>
            <person name="Devine K.M."/>
            <person name="Duesterhoeft A."/>
            <person name="Ehrlich S.D."/>
            <person name="Emmerson P.T."/>
            <person name="Entian K.-D."/>
            <person name="Errington J."/>
            <person name="Fabret C."/>
            <person name="Ferrari E."/>
            <person name="Foulger D."/>
            <person name="Fritz C."/>
            <person name="Fujita M."/>
            <person name="Fujita Y."/>
            <person name="Fuma S."/>
            <person name="Galizzi A."/>
            <person name="Galleron N."/>
            <person name="Ghim S.-Y."/>
            <person name="Glaser P."/>
            <person name="Goffeau A."/>
            <person name="Golightly E.J."/>
            <person name="Grandi G."/>
            <person name="Guiseppi G."/>
            <person name="Guy B.J."/>
            <person name="Haga K."/>
            <person name="Haiech J."/>
            <person name="Harwood C.R."/>
            <person name="Henaut A."/>
            <person name="Hilbert H."/>
            <person name="Holsappel S."/>
            <person name="Hosono S."/>
            <person name="Hullo M.-F."/>
            <person name="Itaya M."/>
            <person name="Jones L.-M."/>
            <person name="Joris B."/>
            <person name="Karamata D."/>
            <person name="Kasahara Y."/>
            <person name="Klaerr-Blanchard M."/>
            <person name="Klein C."/>
            <person name="Kobayashi Y."/>
            <person name="Koetter P."/>
            <person name="Koningstein G."/>
            <person name="Krogh S."/>
            <person name="Kumano M."/>
            <person name="Kurita K."/>
            <person name="Lapidus A."/>
            <person name="Lardinois S."/>
            <person name="Lauber J."/>
            <person name="Lazarevic V."/>
            <person name="Lee S.-M."/>
            <person name="Levine A."/>
            <person name="Liu H."/>
            <person name="Masuda S."/>
            <person name="Mauel C."/>
            <person name="Medigue C."/>
            <person name="Medina N."/>
            <person name="Mellado R.P."/>
            <person name="Mizuno M."/>
            <person name="Moestl D."/>
            <person name="Nakai S."/>
            <person name="Noback M."/>
            <person name="Noone D."/>
            <person name="O'Reilly M."/>
            <person name="Ogawa K."/>
            <person name="Ogiwara A."/>
            <person name="Oudega B."/>
            <person name="Park S.-H."/>
            <person name="Parro V."/>
            <person name="Pohl T.M."/>
            <person name="Portetelle D."/>
            <person name="Porwollik S."/>
            <person name="Prescott A.M."/>
            <person name="Presecan E."/>
            <person name="Pujic P."/>
            <person name="Purnelle B."/>
            <person name="Rapoport G."/>
            <person name="Rey M."/>
            <person name="Reynolds S."/>
            <person name="Rieger M."/>
            <person name="Rivolta C."/>
            <person name="Rocha E."/>
            <person name="Roche B."/>
            <person name="Rose M."/>
            <person name="Sadaie Y."/>
            <person name="Sato T."/>
            <person name="Scanlan E."/>
            <person name="Schleich S."/>
            <person name="Schroeter R."/>
            <person name="Scoffone F."/>
            <person name="Sekiguchi J."/>
            <person name="Sekowska A."/>
            <person name="Seror S.J."/>
            <person name="Serror P."/>
            <person name="Shin B.-S."/>
            <person name="Soldo B."/>
            <person name="Sorokin A."/>
            <person name="Tacconi E."/>
            <person name="Takagi T."/>
            <person name="Takahashi H."/>
            <person name="Takemaru K."/>
            <person name="Takeuchi M."/>
            <person name="Tamakoshi A."/>
            <person name="Tanaka T."/>
            <person name="Terpstra P."/>
            <person name="Tognoni A."/>
            <person name="Tosato V."/>
            <person name="Uchiyama S."/>
            <person name="Vandenbol M."/>
            <person name="Vannier F."/>
            <person name="Vassarotti A."/>
            <person name="Viari A."/>
            <person name="Wambutt R."/>
            <person name="Wedler E."/>
            <person name="Wedler H."/>
            <person name="Weitzenegger T."/>
            <person name="Winters P."/>
            <person name="Wipat A."/>
            <person name="Yamamoto H."/>
            <person name="Yamane K."/>
            <person name="Yasumoto K."/>
            <person name="Yata K."/>
            <person name="Yoshida K."/>
            <person name="Yoshikawa H.-F."/>
            <person name="Zumstein E."/>
            <person name="Yoshikawa H."/>
            <person name="Danchin A."/>
        </authorList>
    </citation>
    <scope>NUCLEOTIDE SEQUENCE [LARGE SCALE GENOMIC DNA]</scope>
    <source>
        <strain>168</strain>
    </source>
</reference>
<reference key="4">
    <citation type="journal article" date="1995" name="J. Bacteriol.">
        <title>ComEA, a Bacillus subtilis integral membrane protein required for genetic transformation, is needed for both DNA binding and transport.</title>
        <authorList>
            <person name="Inamine G.S."/>
            <person name="Dubnau D."/>
        </authorList>
    </citation>
    <scope>CHARACTERIZATION</scope>
</reference>
<reference key="5">
    <citation type="journal article" date="2002" name="Mol. Microbiol.">
        <title>Microarray analysis of the Bacillus subtilis K-state: genome-wide expression changes dependent on ComK.</title>
        <authorList>
            <person name="Berka R.M."/>
            <person name="Hahn J."/>
            <person name="Albano M."/>
            <person name="Draskovic I."/>
            <person name="Persuh M."/>
            <person name="Cui X."/>
            <person name="Sloma A."/>
            <person name="Widner W."/>
            <person name="Dubnau D."/>
        </authorList>
    </citation>
    <scope>INDUCTION</scope>
    <source>
        <strain>168</strain>
    </source>
</reference>
<reference key="6">
    <citation type="journal article" date="2005" name="Cell">
        <title>Transformation proteins and DNA uptake localize to the cell poles in Bacillus subtilis.</title>
        <authorList>
            <person name="Hahn J."/>
            <person name="Maier B."/>
            <person name="Haijema B.J."/>
            <person name="Sheetz M."/>
            <person name="Dubnau D."/>
        </authorList>
    </citation>
    <scope>SUBCELLULAR LOCATION</scope>
    <scope>DEVELOPMENTAL STAGE</scope>
    <source>
        <strain>168</strain>
    </source>
</reference>
<accession>P39694</accession>
<comment type="function">
    <text evidence="4">Needed for both DNA binding and transport. It is absolutely required for the uptake of transforming DNA but not for binding. Its role in binding may be indirect.</text>
</comment>
<comment type="subcellular location">
    <subcellularLocation>
        <location>Cell membrane</location>
        <topology>Single-pass type II membrane protein</topology>
    </subcellularLocation>
    <text evidence="3">Localizes in a nonuniform, punctate manner in competent cells, unlike some other competence proteins is not localized to the cell poles (PubMed:16009133).</text>
</comment>
<comment type="developmental stage">
    <text>Expressed in cells competent for DNA transformation; that is 5-20% of the population (PubMed:16009133).</text>
</comment>
<comment type="induction">
    <text evidence="2">Expression activated by ComK (PubMed:11918817).</text>
</comment>
<name>COMEA_BACSU</name>
<dbReference type="EMBL" id="L15202">
    <property type="protein sequence ID" value="AAC36905.1"/>
    <property type="molecule type" value="Unassigned_DNA"/>
</dbReference>
<dbReference type="EMBL" id="D84432">
    <property type="protein sequence ID" value="BAA12452.1"/>
    <property type="molecule type" value="Genomic_DNA"/>
</dbReference>
<dbReference type="EMBL" id="AL009126">
    <property type="protein sequence ID" value="CAB14501.1"/>
    <property type="molecule type" value="Genomic_DNA"/>
</dbReference>
<dbReference type="PIR" id="S39863">
    <property type="entry name" value="S39863"/>
</dbReference>
<dbReference type="RefSeq" id="NP_390437.1">
    <property type="nucleotide sequence ID" value="NC_000964.3"/>
</dbReference>
<dbReference type="RefSeq" id="WP_004398514.1">
    <property type="nucleotide sequence ID" value="NZ_OZ025638.1"/>
</dbReference>
<dbReference type="PDB" id="8DFK">
    <property type="method" value="X-ray"/>
    <property type="resolution" value="3.20 A"/>
    <property type="chains" value="A/B/C/D/E/F/G=58-205"/>
</dbReference>
<dbReference type="PDBsum" id="8DFK"/>
<dbReference type="SMR" id="P39694"/>
<dbReference type="FunCoup" id="P39694">
    <property type="interactions" value="33"/>
</dbReference>
<dbReference type="STRING" id="224308.BSU25590"/>
<dbReference type="TCDB" id="3.A.11.1.1">
    <property type="family name" value="the bacterial competence-related dna transformation transporter (dna-t) family"/>
</dbReference>
<dbReference type="PaxDb" id="224308-BSU25590"/>
<dbReference type="DNASU" id="937827"/>
<dbReference type="EnsemblBacteria" id="CAB14501">
    <property type="protein sequence ID" value="CAB14501"/>
    <property type="gene ID" value="BSU_25590"/>
</dbReference>
<dbReference type="GeneID" id="937827"/>
<dbReference type="KEGG" id="bsu:BSU25590"/>
<dbReference type="PATRIC" id="fig|224308.179.peg.2782"/>
<dbReference type="eggNOG" id="COG1555">
    <property type="taxonomic scope" value="Bacteria"/>
</dbReference>
<dbReference type="eggNOG" id="COG1596">
    <property type="taxonomic scope" value="Bacteria"/>
</dbReference>
<dbReference type="InParanoid" id="P39694"/>
<dbReference type="OrthoDB" id="9790239at2"/>
<dbReference type="PhylomeDB" id="P39694"/>
<dbReference type="BioCyc" id="BSUB:BSU25590-MONOMER"/>
<dbReference type="Proteomes" id="UP000001570">
    <property type="component" value="Chromosome"/>
</dbReference>
<dbReference type="GO" id="GO:0005886">
    <property type="term" value="C:plasma membrane"/>
    <property type="evidence" value="ECO:0007669"/>
    <property type="project" value="UniProtKB-SubCell"/>
</dbReference>
<dbReference type="GO" id="GO:0015627">
    <property type="term" value="C:type II protein secretion system complex"/>
    <property type="evidence" value="ECO:0000318"/>
    <property type="project" value="GO_Central"/>
</dbReference>
<dbReference type="GO" id="GO:0003677">
    <property type="term" value="F:DNA binding"/>
    <property type="evidence" value="ECO:0007669"/>
    <property type="project" value="InterPro"/>
</dbReference>
<dbReference type="GO" id="GO:0006281">
    <property type="term" value="P:DNA repair"/>
    <property type="evidence" value="ECO:0007669"/>
    <property type="project" value="InterPro"/>
</dbReference>
<dbReference type="GO" id="GO:0030420">
    <property type="term" value="P:establishment of competence for transformation"/>
    <property type="evidence" value="ECO:0007669"/>
    <property type="project" value="UniProtKB-KW"/>
</dbReference>
<dbReference type="GO" id="GO:0015628">
    <property type="term" value="P:protein secretion by the type II secretion system"/>
    <property type="evidence" value="ECO:0000318"/>
    <property type="project" value="GO_Central"/>
</dbReference>
<dbReference type="Gene3D" id="1.10.150.280">
    <property type="entry name" value="AF1531-like domain"/>
    <property type="match status" value="1"/>
</dbReference>
<dbReference type="Gene3D" id="3.10.560.10">
    <property type="entry name" value="Outer membrane lipoprotein wza domain like"/>
    <property type="match status" value="1"/>
</dbReference>
<dbReference type="InterPro" id="IPR004787">
    <property type="entry name" value="Competence_ComE"/>
</dbReference>
<dbReference type="InterPro" id="IPR004509">
    <property type="entry name" value="Competence_ComEA_HhH"/>
</dbReference>
<dbReference type="InterPro" id="IPR051675">
    <property type="entry name" value="Endo/Exo/Phosphatase_dom_1"/>
</dbReference>
<dbReference type="InterPro" id="IPR003583">
    <property type="entry name" value="Hlx-hairpin-Hlx_DNA-bd_motif"/>
</dbReference>
<dbReference type="InterPro" id="IPR010994">
    <property type="entry name" value="RuvA_2-like"/>
</dbReference>
<dbReference type="InterPro" id="IPR019554">
    <property type="entry name" value="Soluble_ligand-bd"/>
</dbReference>
<dbReference type="NCBIfam" id="TIGR01259">
    <property type="entry name" value="comE"/>
    <property type="match status" value="1"/>
</dbReference>
<dbReference type="NCBIfam" id="TIGR00426">
    <property type="entry name" value="competence protein ComEA helix-hairpin-helix repeat region"/>
    <property type="match status" value="1"/>
</dbReference>
<dbReference type="PANTHER" id="PTHR21180">
    <property type="entry name" value="ENDONUCLEASE/EXONUCLEASE/PHOSPHATASE FAMILY DOMAIN-CONTAINING PROTEIN 1"/>
    <property type="match status" value="1"/>
</dbReference>
<dbReference type="PANTHER" id="PTHR21180:SF32">
    <property type="entry name" value="ENDONUCLEASE_EXONUCLEASE_PHOSPHATASE FAMILY DOMAIN-CONTAINING PROTEIN 1"/>
    <property type="match status" value="1"/>
</dbReference>
<dbReference type="Pfam" id="PF12836">
    <property type="entry name" value="HHH_3"/>
    <property type="match status" value="1"/>
</dbReference>
<dbReference type="Pfam" id="PF10531">
    <property type="entry name" value="SLBB"/>
    <property type="match status" value="1"/>
</dbReference>
<dbReference type="SMART" id="SM00278">
    <property type="entry name" value="HhH1"/>
    <property type="match status" value="2"/>
</dbReference>
<dbReference type="SUPFAM" id="SSF47781">
    <property type="entry name" value="RuvA domain 2-like"/>
    <property type="match status" value="1"/>
</dbReference>
<gene>
    <name type="primary">comEA</name>
    <name type="synonym">comE1</name>
    <name type="ordered locus">BSU25590</name>
</gene>
<proteinExistence type="evidence at protein level"/>
<organism>
    <name type="scientific">Bacillus subtilis (strain 168)</name>
    <dbReference type="NCBI Taxonomy" id="224308"/>
    <lineage>
        <taxon>Bacteria</taxon>
        <taxon>Bacillati</taxon>
        <taxon>Bacillota</taxon>
        <taxon>Bacilli</taxon>
        <taxon>Bacillales</taxon>
        <taxon>Bacillaceae</taxon>
        <taxon>Bacillus</taxon>
    </lineage>
</organism>
<feature type="chain" id="PRO_0000090008" description="ComE operon protein 1">
    <location>
        <begin position="1"/>
        <end position="205"/>
    </location>
</feature>
<feature type="topological domain" description="Cytoplasmic" evidence="1">
    <location>
        <begin position="1"/>
        <end position="9"/>
    </location>
</feature>
<feature type="transmembrane region" description="Helical" evidence="1">
    <location>
        <begin position="10"/>
        <end position="28"/>
    </location>
</feature>
<feature type="topological domain" description="Extracellular" evidence="1">
    <location>
        <begin position="29"/>
        <end position="205"/>
    </location>
</feature>
<feature type="domain" description="HhH 1">
    <location>
        <begin position="142"/>
        <end position="171"/>
    </location>
</feature>
<feature type="domain" description="HhH 2">
    <location>
        <begin position="172"/>
        <end position="201"/>
    </location>
</feature>
<feature type="strand" evidence="5">
    <location>
        <begin position="61"/>
        <end position="66"/>
    </location>
</feature>
<feature type="strand" evidence="5">
    <location>
        <begin position="68"/>
        <end position="72"/>
    </location>
</feature>
<feature type="strand" evidence="5">
    <location>
        <begin position="74"/>
        <end position="79"/>
    </location>
</feature>
<feature type="helix" evidence="5">
    <location>
        <begin position="84"/>
        <end position="90"/>
    </location>
</feature>
<feature type="helix" evidence="5">
    <location>
        <begin position="100"/>
        <end position="102"/>
    </location>
</feature>
<keyword id="KW-0002">3D-structure</keyword>
<keyword id="KW-1003">Cell membrane</keyword>
<keyword id="KW-0178">Competence</keyword>
<keyword id="KW-0472">Membrane</keyword>
<keyword id="KW-1185">Reference proteome</keyword>
<keyword id="KW-0677">Repeat</keyword>
<keyword id="KW-0812">Transmembrane</keyword>
<keyword id="KW-1133">Transmembrane helix</keyword>
<sequence length="205" mass="21769">MNWLNQHKKAIILAASAAVFTAIMIFLATGKNKEPVKQAVPTETENTVVKQEANNDESNETIVIDIKGAVQHPGVYEMRTGDRVSQAIEKAGGTSEQADEAQVNLAEILQDGTVVYIPKKGEETAVQQGGGGSVQSDGGKGALVNINTATLEELQGISGVGPSKAEAIIAYREENGRFQTIEDITKVSGIGEKSFEKIKSSITVK</sequence>
<protein>
    <recommendedName>
        <fullName>ComE operon protein 1</fullName>
    </recommendedName>
</protein>
<evidence type="ECO:0000255" key="1"/>
<evidence type="ECO:0000269" key="2">
    <source>
    </source>
</evidence>
<evidence type="ECO:0000269" key="3">
    <source>
    </source>
</evidence>
<evidence type="ECO:0000269" key="4">
    <source>
    </source>
</evidence>
<evidence type="ECO:0007829" key="5">
    <source>
        <dbReference type="PDB" id="8DFK"/>
    </source>
</evidence>